<name>VE7_HPV6B</name>
<evidence type="ECO:0000255" key="1">
    <source>
        <dbReference type="HAMAP-Rule" id="MF_04004"/>
    </source>
</evidence>
<keyword id="KW-0010">Activator</keyword>
<keyword id="KW-0238">DNA-binding</keyword>
<keyword id="KW-0244">Early protein</keyword>
<keyword id="KW-1078">G1/S host cell cycle checkpoint dysregulation by virus</keyword>
<keyword id="KW-1035">Host cytoplasm</keyword>
<keyword id="KW-1048">Host nucleus</keyword>
<keyword id="KW-0945">Host-virus interaction</keyword>
<keyword id="KW-1090">Inhibition of host innate immune response by virus</keyword>
<keyword id="KW-1114">Inhibition of host interferon signaling pathway by virus</keyword>
<keyword id="KW-0922">Interferon antiviral system evasion</keyword>
<keyword id="KW-0479">Metal-binding</keyword>
<keyword id="KW-1121">Modulation of host cell cycle by virus</keyword>
<keyword id="KW-0553">Oncogene</keyword>
<keyword id="KW-0804">Transcription</keyword>
<keyword id="KW-0805">Transcription regulation</keyword>
<keyword id="KW-0899">Viral immunoevasion</keyword>
<keyword id="KW-0862">Zinc</keyword>
<keyword id="KW-0863">Zinc-finger</keyword>
<feature type="chain" id="PRO_0000133405" description="Protein E7">
    <location>
        <begin position="1"/>
        <end position="98"/>
    </location>
</feature>
<feature type="zinc finger region" evidence="1">
    <location>
        <begin position="58"/>
        <end position="94"/>
    </location>
</feature>
<feature type="region of interest" description="E7 terminal domain" evidence="1">
    <location>
        <begin position="1"/>
        <end position="42"/>
    </location>
</feature>
<feature type="short sequence motif" description="LXCXE motif; interaction with host RB1 and TMEM173/STING" evidence="1">
    <location>
        <begin position="23"/>
        <end position="27"/>
    </location>
</feature>
<feature type="short sequence motif" description="Nuclear export signal" evidence="1">
    <location>
        <begin position="76"/>
        <end position="84"/>
    </location>
</feature>
<organism>
    <name type="scientific">Human papillomavirus type 6b</name>
    <dbReference type="NCBI Taxonomy" id="10600"/>
    <lineage>
        <taxon>Viruses</taxon>
        <taxon>Monodnaviria</taxon>
        <taxon>Shotokuvirae</taxon>
        <taxon>Cossaviricota</taxon>
        <taxon>Papovaviricetes</taxon>
        <taxon>Zurhausenvirales</taxon>
        <taxon>Papillomaviridae</taxon>
        <taxon>Firstpapillomavirinae</taxon>
        <taxon>Alphapapillomavirus</taxon>
        <taxon>Alphapapillomavirus 10</taxon>
    </lineage>
</organism>
<accession>P06464</accession>
<reference key="1">
    <citation type="journal article" date="1983" name="EMBO J.">
        <title>DNA sequence and genome organization of genital human papillomavirus type 6b.</title>
        <authorList>
            <person name="Schwarz E."/>
            <person name="Durst M."/>
            <person name="Demankowski C."/>
            <person name="Lattermann O."/>
            <person name="Zech R."/>
            <person name="Wolfsperger E."/>
            <person name="Suhai S."/>
            <person name="zur Hausen H."/>
        </authorList>
    </citation>
    <scope>NUCLEOTIDE SEQUENCE [GENOMIC DNA]</scope>
</reference>
<reference key="2">
    <citation type="journal article" date="2005" name="Proc. Natl. Acad. Sci. U.S.A.">
        <title>Association of the human papillomavirus type 16 E7 oncoprotein with the 600-kDa retinoblastoma protein-associated factor, p600.</title>
        <authorList>
            <person name="Huh K.-W."/>
            <person name="DeMasi J."/>
            <person name="Ogawa H."/>
            <person name="Nakatani Y."/>
            <person name="Howley P.M."/>
            <person name="Muenger K."/>
        </authorList>
    </citation>
    <scope>INTERACTION WITH HUMAN ZUBR1</scope>
</reference>
<reference key="3">
    <citation type="journal article" date="2002" name="Rev. Med. Virol.">
        <title>Interactions of SV40 large T antigen and other viral proteins with retinoblastoma tumour suppressor.</title>
        <authorList>
            <person name="Lee C."/>
            <person name="Cho Y."/>
        </authorList>
    </citation>
    <scope>REVIEW</scope>
</reference>
<organismHost>
    <name type="scientific">Homo sapiens</name>
    <name type="common">Human</name>
    <dbReference type="NCBI Taxonomy" id="9606"/>
</organismHost>
<dbReference type="EMBL" id="X00203">
    <property type="protein sequence ID" value="CAA25019.1"/>
    <property type="molecule type" value="Genomic_DNA"/>
</dbReference>
<dbReference type="PIR" id="D20558">
    <property type="entry name" value="W7WL6"/>
</dbReference>
<dbReference type="RefSeq" id="NP_040297.1">
    <property type="nucleotide sequence ID" value="NC_001355.1"/>
</dbReference>
<dbReference type="SMR" id="P06464"/>
<dbReference type="BioGRID" id="3509163">
    <property type="interactions" value="106"/>
</dbReference>
<dbReference type="IntAct" id="P06464">
    <property type="interactions" value="45"/>
</dbReference>
<dbReference type="MINT" id="P06464"/>
<dbReference type="GeneID" id="1489369"/>
<dbReference type="KEGG" id="vg:1489369"/>
<dbReference type="OrthoDB" id="28045at10239"/>
<dbReference type="Proteomes" id="UP000007676">
    <property type="component" value="Genome"/>
</dbReference>
<dbReference type="GO" id="GO:0030430">
    <property type="term" value="C:host cell cytoplasm"/>
    <property type="evidence" value="ECO:0007669"/>
    <property type="project" value="UniProtKB-SubCell"/>
</dbReference>
<dbReference type="GO" id="GO:0042025">
    <property type="term" value="C:host cell nucleus"/>
    <property type="evidence" value="ECO:0007669"/>
    <property type="project" value="UniProtKB-SubCell"/>
</dbReference>
<dbReference type="GO" id="GO:0003677">
    <property type="term" value="F:DNA binding"/>
    <property type="evidence" value="ECO:0007669"/>
    <property type="project" value="UniProtKB-UniRule"/>
</dbReference>
<dbReference type="GO" id="GO:0003700">
    <property type="term" value="F:DNA-binding transcription factor activity"/>
    <property type="evidence" value="ECO:0007669"/>
    <property type="project" value="UniProtKB-UniRule"/>
</dbReference>
<dbReference type="GO" id="GO:0019904">
    <property type="term" value="F:protein domain specific binding"/>
    <property type="evidence" value="ECO:0007669"/>
    <property type="project" value="UniProtKB-UniRule"/>
</dbReference>
<dbReference type="GO" id="GO:0008270">
    <property type="term" value="F:zinc ion binding"/>
    <property type="evidence" value="ECO:0007669"/>
    <property type="project" value="UniProtKB-KW"/>
</dbReference>
<dbReference type="GO" id="GO:0006351">
    <property type="term" value="P:DNA-templated transcription"/>
    <property type="evidence" value="ECO:0007669"/>
    <property type="project" value="UniProtKB-UniRule"/>
</dbReference>
<dbReference type="GO" id="GO:0039645">
    <property type="term" value="P:symbiont-mediated perturbation of host cell cycle G1/S transition checkpoint"/>
    <property type="evidence" value="ECO:0007669"/>
    <property type="project" value="UniProtKB-UniRule"/>
</dbReference>
<dbReference type="GO" id="GO:0052170">
    <property type="term" value="P:symbiont-mediated suppression of host innate immune response"/>
    <property type="evidence" value="ECO:0007669"/>
    <property type="project" value="UniProtKB-KW"/>
</dbReference>
<dbReference type="GO" id="GO:0039502">
    <property type="term" value="P:symbiont-mediated suppression of host type I interferon-mediated signaling pathway"/>
    <property type="evidence" value="ECO:0007669"/>
    <property type="project" value="UniProtKB-UniRule"/>
</dbReference>
<dbReference type="Gene3D" id="3.30.160.330">
    <property type="match status" value="1"/>
</dbReference>
<dbReference type="HAMAP" id="MF_04004">
    <property type="entry name" value="PPV_E7"/>
    <property type="match status" value="1"/>
</dbReference>
<dbReference type="InterPro" id="IPR000148">
    <property type="entry name" value="Papilloma_E7"/>
</dbReference>
<dbReference type="Pfam" id="PF00527">
    <property type="entry name" value="E7"/>
    <property type="match status" value="1"/>
</dbReference>
<dbReference type="PIRSF" id="PIRSF003407">
    <property type="entry name" value="Papvi_E7"/>
    <property type="match status" value="1"/>
</dbReference>
<dbReference type="SUPFAM" id="SSF161234">
    <property type="entry name" value="E7 C-terminal domain-like"/>
    <property type="match status" value="1"/>
</dbReference>
<proteinExistence type="evidence at protein level"/>
<protein>
    <recommendedName>
        <fullName evidence="1">Protein E7</fullName>
    </recommendedName>
</protein>
<comment type="function">
    <text evidence="1">Plays a role in viral genome replication by driving entry of quiescent cells into the cell cycle. Stimulation of progression from G1 to S phase allows the virus to efficiently use the cellular DNA replicating machinery to achieve viral genome replication. E7 protein has both transforming and trans-activating activities. Induces the disassembly of the E2F1 transcription factor from RB1, with subsequent transcriptional activation of E2F1-regulated S-phase genes. Interferes with host histone deacetylation mediated by HDAC1 and HDAC2, leading to transcription activation. Also plays a role in the inhibition of both antiviral and antiproliferative functions of host interferon alpha. Interaction with host TMEM173/STING impairs the ability of TMEM173/STING to sense cytosolic DNA and promote the production of type I interferon (IFN-alpha and IFN-beta).</text>
</comment>
<comment type="subunit">
    <text evidence="1">Homodimer. Homooligomer. Interacts with host RB1; this interaction induces dissociation of RB1-E2F1 complex thereby disrupting RB1 activity. Interacts with host EP300; this interaction represses EP300 transcriptional activity. Interacts with protein E2; this interaction inhibits E7 oncogenic activity. Interacts with host TMEM173/STING; this interaction impairs the ability of TMEM173/STING to sense cytosolic DNA and promote the production of type I interferon (IFN-alpha and IFN-beta).</text>
</comment>
<comment type="interaction">
    <interactant intactId="EBI-6944797">
        <id>P06464</id>
    </interactant>
    <interactant intactId="EBI-491274">
        <id>P06400</id>
        <label>RB1</label>
    </interactant>
    <organismsDiffer>true</organismsDiffer>
    <experiments>3</experiments>
</comment>
<comment type="interaction">
    <interactant intactId="EBI-6944797">
        <id>P06464</id>
    </interactant>
    <interactant intactId="EBI-1995940">
        <id>Q5T4S7</id>
        <label>UBR4</label>
    </interactant>
    <organismsDiffer>true</organismsDiffer>
    <experiments>2</experiments>
</comment>
<comment type="subcellular location">
    <subcellularLocation>
        <location evidence="1">Host cytoplasm</location>
    </subcellularLocation>
    <subcellularLocation>
        <location evidence="1">Host nucleus</location>
    </subcellularLocation>
    <text evidence="1">Predominantly found in the host nucleus.</text>
</comment>
<comment type="domain">
    <text evidence="1">The E7 terminal domain is an intrinsically disordered domain, whose flexibility and conformational transitions confer target adaptability to the oncoprotein. It allows adaptation to a variety of protein targets and exposes the PEST degradation sequence that regulates its turnover in the cell.</text>
</comment>
<comment type="PTM">
    <text evidence="1">Highly phosphorylated.</text>
</comment>
<comment type="similarity">
    <text evidence="1">Belongs to the papillomaviridae E7 protein family.</text>
</comment>
<gene>
    <name evidence="1" type="primary">E7</name>
</gene>
<sequence>MHGRHVTLKDIVLDLQPPDPVGLHCYEQLVDSSEDEVDEVDGQDSQPLKQHFQIVTCCCGCDSNVRLVVQCTETDIREVQQLLLGTLNIVCPICAPKT</sequence>